<sequence length="384" mass="39581">MTEQRAGSPAGNDLRSCAVIDLDAVRTSVTALVARAGDAATMAVVKADGYGHGMIPCARAALEGGATWLGTAFLEEALALRAAGFTVPVLSWLAAPGESFAAAIAADVDLSASAGWALEEAAAAARRTGRTARVHLKADTGLGRAGATEADWPALCDAGAALEAEGVIEVIGVWSHFAFADAPGHPTVQGQIGRFRDAIDIATKAGLHPSVRHLANSAATLVSPEAHFDLVRPGVSVYGLSPGPEIGPPAAFGLRPAMTLTTHAALTKRVPAGTGVSYAHRYTTTRETTLAVVPLGYADGIPRSATNTAEVLFGGRRRRIAGTVCMDQFVLDVGDDQVAAGDEVLLFGPGDRGEPTADDWAAALGTINYEIVSRVGARVPRRYV</sequence>
<comment type="function">
    <text evidence="1">Catalyzes the interconversion of L-alanine and D-alanine. May also act on other amino acids.</text>
</comment>
<comment type="catalytic activity">
    <reaction evidence="1">
        <text>L-alanine = D-alanine</text>
        <dbReference type="Rhea" id="RHEA:20249"/>
        <dbReference type="ChEBI" id="CHEBI:57416"/>
        <dbReference type="ChEBI" id="CHEBI:57972"/>
        <dbReference type="EC" id="5.1.1.1"/>
    </reaction>
</comment>
<comment type="cofactor">
    <cofactor evidence="1">
        <name>pyridoxal 5'-phosphate</name>
        <dbReference type="ChEBI" id="CHEBI:597326"/>
    </cofactor>
</comment>
<comment type="pathway">
    <text evidence="1">Amino-acid biosynthesis; D-alanine biosynthesis; D-alanine from L-alanine: step 1/1.</text>
</comment>
<comment type="similarity">
    <text evidence="1">Belongs to the alanine racemase family.</text>
</comment>
<reference key="1">
    <citation type="journal article" date="2007" name="Genome Res.">
        <title>Genome characteristics of facultatively symbiotic Frankia sp. strains reflect host range and host plant biogeography.</title>
        <authorList>
            <person name="Normand P."/>
            <person name="Lapierre P."/>
            <person name="Tisa L.S."/>
            <person name="Gogarten J.P."/>
            <person name="Alloisio N."/>
            <person name="Bagnarol E."/>
            <person name="Bassi C.A."/>
            <person name="Berry A.M."/>
            <person name="Bickhart D.M."/>
            <person name="Choisne N."/>
            <person name="Couloux A."/>
            <person name="Cournoyer B."/>
            <person name="Cruveiller S."/>
            <person name="Daubin V."/>
            <person name="Demange N."/>
            <person name="Francino M.P."/>
            <person name="Goltsman E."/>
            <person name="Huang Y."/>
            <person name="Kopp O.R."/>
            <person name="Labarre L."/>
            <person name="Lapidus A."/>
            <person name="Lavire C."/>
            <person name="Marechal J."/>
            <person name="Martinez M."/>
            <person name="Mastronunzio J.E."/>
            <person name="Mullin B.C."/>
            <person name="Niemann J."/>
            <person name="Pujic P."/>
            <person name="Rawnsley T."/>
            <person name="Rouy Z."/>
            <person name="Schenowitz C."/>
            <person name="Sellstedt A."/>
            <person name="Tavares F."/>
            <person name="Tomkins J.P."/>
            <person name="Vallenet D."/>
            <person name="Valverde C."/>
            <person name="Wall L.G."/>
            <person name="Wang Y."/>
            <person name="Medigue C."/>
            <person name="Benson D.R."/>
        </authorList>
    </citation>
    <scope>NUCLEOTIDE SEQUENCE [LARGE SCALE GENOMIC DNA]</scope>
    <source>
        <strain>DSM 45818 / CECT 9043 / HFP020203 / CcI3</strain>
    </source>
</reference>
<organism>
    <name type="scientific">Frankia casuarinae (strain DSM 45818 / CECT 9043 / HFP020203 / CcI3)</name>
    <dbReference type="NCBI Taxonomy" id="106370"/>
    <lineage>
        <taxon>Bacteria</taxon>
        <taxon>Bacillati</taxon>
        <taxon>Actinomycetota</taxon>
        <taxon>Actinomycetes</taxon>
        <taxon>Frankiales</taxon>
        <taxon>Frankiaceae</taxon>
        <taxon>Frankia</taxon>
    </lineage>
</organism>
<accession>Q2JFD6</accession>
<evidence type="ECO:0000255" key="1">
    <source>
        <dbReference type="HAMAP-Rule" id="MF_01201"/>
    </source>
</evidence>
<protein>
    <recommendedName>
        <fullName evidence="1">Alanine racemase</fullName>
        <ecNumber evidence="1">5.1.1.1</ecNumber>
    </recommendedName>
</protein>
<proteinExistence type="inferred from homology"/>
<name>ALR_FRACC</name>
<feature type="chain" id="PRO_1000065989" description="Alanine racemase">
    <location>
        <begin position="1"/>
        <end position="384"/>
    </location>
</feature>
<feature type="active site" description="Proton acceptor; specific for D-alanine" evidence="1">
    <location>
        <position position="46"/>
    </location>
</feature>
<feature type="active site" description="Proton acceptor; specific for L-alanine" evidence="1">
    <location>
        <position position="278"/>
    </location>
</feature>
<feature type="binding site" evidence="1">
    <location>
        <position position="144"/>
    </location>
    <ligand>
        <name>substrate</name>
    </ligand>
</feature>
<feature type="binding site" evidence="1">
    <location>
        <position position="326"/>
    </location>
    <ligand>
        <name>substrate</name>
    </ligand>
</feature>
<feature type="modified residue" description="N6-(pyridoxal phosphate)lysine" evidence="1">
    <location>
        <position position="46"/>
    </location>
</feature>
<keyword id="KW-0413">Isomerase</keyword>
<keyword id="KW-0663">Pyridoxal phosphate</keyword>
<keyword id="KW-1185">Reference proteome</keyword>
<gene>
    <name type="primary">alr</name>
    <name type="ordered locus">Francci3_0622</name>
</gene>
<dbReference type="EC" id="5.1.1.1" evidence="1"/>
<dbReference type="EMBL" id="CP000249">
    <property type="protein sequence ID" value="ABD10006.1"/>
    <property type="molecule type" value="Genomic_DNA"/>
</dbReference>
<dbReference type="RefSeq" id="WP_011435075.1">
    <property type="nucleotide sequence ID" value="NZ_LRTJ01000063.1"/>
</dbReference>
<dbReference type="SMR" id="Q2JFD6"/>
<dbReference type="STRING" id="106370.Francci3_0622"/>
<dbReference type="KEGG" id="fra:Francci3_0622"/>
<dbReference type="eggNOG" id="COG0787">
    <property type="taxonomic scope" value="Bacteria"/>
</dbReference>
<dbReference type="HOGENOM" id="CLU_028393_0_0_11"/>
<dbReference type="OrthoDB" id="9813814at2"/>
<dbReference type="PhylomeDB" id="Q2JFD6"/>
<dbReference type="UniPathway" id="UPA00042">
    <property type="reaction ID" value="UER00497"/>
</dbReference>
<dbReference type="Proteomes" id="UP000001937">
    <property type="component" value="Chromosome"/>
</dbReference>
<dbReference type="GO" id="GO:0005829">
    <property type="term" value="C:cytosol"/>
    <property type="evidence" value="ECO:0007669"/>
    <property type="project" value="TreeGrafter"/>
</dbReference>
<dbReference type="GO" id="GO:0008784">
    <property type="term" value="F:alanine racemase activity"/>
    <property type="evidence" value="ECO:0007669"/>
    <property type="project" value="UniProtKB-UniRule"/>
</dbReference>
<dbReference type="GO" id="GO:0030170">
    <property type="term" value="F:pyridoxal phosphate binding"/>
    <property type="evidence" value="ECO:0007669"/>
    <property type="project" value="UniProtKB-UniRule"/>
</dbReference>
<dbReference type="GO" id="GO:0030632">
    <property type="term" value="P:D-alanine biosynthetic process"/>
    <property type="evidence" value="ECO:0007669"/>
    <property type="project" value="UniProtKB-UniRule"/>
</dbReference>
<dbReference type="GO" id="GO:0009252">
    <property type="term" value="P:peptidoglycan biosynthetic process"/>
    <property type="evidence" value="ECO:0007669"/>
    <property type="project" value="TreeGrafter"/>
</dbReference>
<dbReference type="CDD" id="cd00430">
    <property type="entry name" value="PLPDE_III_AR"/>
    <property type="match status" value="1"/>
</dbReference>
<dbReference type="FunFam" id="2.40.37.10:FF:000015">
    <property type="entry name" value="Alanine racemase"/>
    <property type="match status" value="1"/>
</dbReference>
<dbReference type="FunFam" id="3.20.20.10:FF:000002">
    <property type="entry name" value="Alanine racemase"/>
    <property type="match status" value="1"/>
</dbReference>
<dbReference type="Gene3D" id="3.20.20.10">
    <property type="entry name" value="Alanine racemase"/>
    <property type="match status" value="1"/>
</dbReference>
<dbReference type="Gene3D" id="2.40.37.10">
    <property type="entry name" value="Lyase, Ornithine Decarboxylase, Chain A, domain 1"/>
    <property type="match status" value="1"/>
</dbReference>
<dbReference type="HAMAP" id="MF_01201">
    <property type="entry name" value="Ala_racemase"/>
    <property type="match status" value="1"/>
</dbReference>
<dbReference type="InterPro" id="IPR000821">
    <property type="entry name" value="Ala_racemase"/>
</dbReference>
<dbReference type="InterPro" id="IPR009006">
    <property type="entry name" value="Ala_racemase/Decarboxylase_C"/>
</dbReference>
<dbReference type="InterPro" id="IPR011079">
    <property type="entry name" value="Ala_racemase_C"/>
</dbReference>
<dbReference type="InterPro" id="IPR001608">
    <property type="entry name" value="Ala_racemase_N"/>
</dbReference>
<dbReference type="InterPro" id="IPR020622">
    <property type="entry name" value="Ala_racemase_pyridoxalP-BS"/>
</dbReference>
<dbReference type="InterPro" id="IPR029066">
    <property type="entry name" value="PLP-binding_barrel"/>
</dbReference>
<dbReference type="NCBIfam" id="TIGR00492">
    <property type="entry name" value="alr"/>
    <property type="match status" value="1"/>
</dbReference>
<dbReference type="PANTHER" id="PTHR30511">
    <property type="entry name" value="ALANINE RACEMASE"/>
    <property type="match status" value="1"/>
</dbReference>
<dbReference type="PANTHER" id="PTHR30511:SF0">
    <property type="entry name" value="ALANINE RACEMASE, CATABOLIC-RELATED"/>
    <property type="match status" value="1"/>
</dbReference>
<dbReference type="Pfam" id="PF00842">
    <property type="entry name" value="Ala_racemase_C"/>
    <property type="match status" value="1"/>
</dbReference>
<dbReference type="Pfam" id="PF01168">
    <property type="entry name" value="Ala_racemase_N"/>
    <property type="match status" value="1"/>
</dbReference>
<dbReference type="PRINTS" id="PR00992">
    <property type="entry name" value="ALARACEMASE"/>
</dbReference>
<dbReference type="SMART" id="SM01005">
    <property type="entry name" value="Ala_racemase_C"/>
    <property type="match status" value="1"/>
</dbReference>
<dbReference type="SUPFAM" id="SSF50621">
    <property type="entry name" value="Alanine racemase C-terminal domain-like"/>
    <property type="match status" value="1"/>
</dbReference>
<dbReference type="SUPFAM" id="SSF51419">
    <property type="entry name" value="PLP-binding barrel"/>
    <property type="match status" value="1"/>
</dbReference>
<dbReference type="PROSITE" id="PS00395">
    <property type="entry name" value="ALANINE_RACEMASE"/>
    <property type="match status" value="1"/>
</dbReference>